<comment type="function">
    <text evidence="1">Specifically methylates the guanine in position 1207 of 16S rRNA in the 30S particle.</text>
</comment>
<comment type="catalytic activity">
    <reaction evidence="1">
        <text>guanosine(1207) in 16S rRNA + S-adenosyl-L-methionine = N(2)-methylguanosine(1207) in 16S rRNA + S-adenosyl-L-homocysteine + H(+)</text>
        <dbReference type="Rhea" id="RHEA:42736"/>
        <dbReference type="Rhea" id="RHEA-COMP:10213"/>
        <dbReference type="Rhea" id="RHEA-COMP:10214"/>
        <dbReference type="ChEBI" id="CHEBI:15378"/>
        <dbReference type="ChEBI" id="CHEBI:57856"/>
        <dbReference type="ChEBI" id="CHEBI:59789"/>
        <dbReference type="ChEBI" id="CHEBI:74269"/>
        <dbReference type="ChEBI" id="CHEBI:74481"/>
        <dbReference type="EC" id="2.1.1.172"/>
    </reaction>
</comment>
<comment type="subunit">
    <text evidence="1">Monomer.</text>
</comment>
<comment type="subcellular location">
    <subcellularLocation>
        <location evidence="1">Cytoplasm</location>
    </subcellularLocation>
</comment>
<comment type="similarity">
    <text evidence="1">Belongs to the methyltransferase superfamily. RsmC family.</text>
</comment>
<evidence type="ECO:0000255" key="1">
    <source>
        <dbReference type="HAMAP-Rule" id="MF_01862"/>
    </source>
</evidence>
<name>RSMC_PSEP7</name>
<reference key="1">
    <citation type="submission" date="2007-06" db="EMBL/GenBank/DDBJ databases">
        <authorList>
            <person name="Dodson R.J."/>
            <person name="Harkins D."/>
            <person name="Paulsen I.T."/>
        </authorList>
    </citation>
    <scope>NUCLEOTIDE SEQUENCE [LARGE SCALE GENOMIC DNA]</scope>
    <source>
        <strain>DSM 24068 / PA7</strain>
    </source>
</reference>
<protein>
    <recommendedName>
        <fullName evidence="1">Ribosomal RNA small subunit methyltransferase C</fullName>
        <ecNumber evidence="1">2.1.1.172</ecNumber>
    </recommendedName>
    <alternativeName>
        <fullName evidence="1">16S rRNA m2G1207 methyltransferase</fullName>
    </alternativeName>
    <alternativeName>
        <fullName evidence="1">rRNA (guanine-N(2)-)-methyltransferase RsmC</fullName>
    </alternativeName>
</protein>
<gene>
    <name evidence="1" type="primary">rsmC</name>
    <name type="ordered locus">PSPA7_5273</name>
</gene>
<dbReference type="EC" id="2.1.1.172" evidence="1"/>
<dbReference type="EMBL" id="CP000744">
    <property type="protein sequence ID" value="ABR83730.1"/>
    <property type="molecule type" value="Genomic_DNA"/>
</dbReference>
<dbReference type="RefSeq" id="WP_012077361.1">
    <property type="nucleotide sequence ID" value="NC_009656.1"/>
</dbReference>
<dbReference type="SMR" id="A6VC20"/>
<dbReference type="KEGG" id="pap:PSPA7_5273"/>
<dbReference type="HOGENOM" id="CLU_049581_0_0_6"/>
<dbReference type="Proteomes" id="UP000001582">
    <property type="component" value="Chromosome"/>
</dbReference>
<dbReference type="GO" id="GO:0005737">
    <property type="term" value="C:cytoplasm"/>
    <property type="evidence" value="ECO:0007669"/>
    <property type="project" value="UniProtKB-SubCell"/>
</dbReference>
<dbReference type="GO" id="GO:0052914">
    <property type="term" value="F:16S rRNA (guanine(1207)-N(2))-methyltransferase activity"/>
    <property type="evidence" value="ECO:0007669"/>
    <property type="project" value="UniProtKB-EC"/>
</dbReference>
<dbReference type="GO" id="GO:0003676">
    <property type="term" value="F:nucleic acid binding"/>
    <property type="evidence" value="ECO:0007669"/>
    <property type="project" value="InterPro"/>
</dbReference>
<dbReference type="CDD" id="cd02440">
    <property type="entry name" value="AdoMet_MTases"/>
    <property type="match status" value="1"/>
</dbReference>
<dbReference type="Gene3D" id="3.40.50.150">
    <property type="entry name" value="Vaccinia Virus protein VP39"/>
    <property type="match status" value="2"/>
</dbReference>
<dbReference type="HAMAP" id="MF_01862">
    <property type="entry name" value="16SrRNA_methyltr_C"/>
    <property type="match status" value="1"/>
</dbReference>
<dbReference type="InterPro" id="IPR002052">
    <property type="entry name" value="DNA_methylase_N6_adenine_CS"/>
</dbReference>
<dbReference type="InterPro" id="IPR013675">
    <property type="entry name" value="Mtase_sm_N"/>
</dbReference>
<dbReference type="InterPro" id="IPR023543">
    <property type="entry name" value="rRNA_ssu_MeTfrase_C"/>
</dbReference>
<dbReference type="InterPro" id="IPR046977">
    <property type="entry name" value="RsmC/RlmG"/>
</dbReference>
<dbReference type="InterPro" id="IPR029063">
    <property type="entry name" value="SAM-dependent_MTases_sf"/>
</dbReference>
<dbReference type="InterPro" id="IPR007848">
    <property type="entry name" value="Small_mtfrase_dom"/>
</dbReference>
<dbReference type="PANTHER" id="PTHR47816">
    <property type="entry name" value="RIBOSOMAL RNA SMALL SUBUNIT METHYLTRANSFERASE C"/>
    <property type="match status" value="1"/>
</dbReference>
<dbReference type="PANTHER" id="PTHR47816:SF4">
    <property type="entry name" value="RIBOSOMAL RNA SMALL SUBUNIT METHYLTRANSFERASE C"/>
    <property type="match status" value="1"/>
</dbReference>
<dbReference type="Pfam" id="PF05175">
    <property type="entry name" value="MTS"/>
    <property type="match status" value="1"/>
</dbReference>
<dbReference type="Pfam" id="PF08468">
    <property type="entry name" value="MTS_N"/>
    <property type="match status" value="1"/>
</dbReference>
<dbReference type="SUPFAM" id="SSF53335">
    <property type="entry name" value="S-adenosyl-L-methionine-dependent methyltransferases"/>
    <property type="match status" value="1"/>
</dbReference>
<organism>
    <name type="scientific">Pseudomonas paraeruginosa (strain DSM 24068 / PA7)</name>
    <name type="common">Pseudomonas aeruginosa (strain PA7)</name>
    <dbReference type="NCBI Taxonomy" id="381754"/>
    <lineage>
        <taxon>Bacteria</taxon>
        <taxon>Pseudomonadati</taxon>
        <taxon>Pseudomonadota</taxon>
        <taxon>Gammaproteobacteria</taxon>
        <taxon>Pseudomonadales</taxon>
        <taxon>Pseudomonadaceae</taxon>
        <taxon>Pseudomonas</taxon>
        <taxon>Pseudomonas paraeruginosa</taxon>
    </lineage>
</organism>
<feature type="chain" id="PRO_0000369736" description="Ribosomal RNA small subunit methyltransferase C">
    <location>
        <begin position="1"/>
        <end position="332"/>
    </location>
</feature>
<sequence>MDPRSEVLLRQRHLFAAPTLLAGLPADDLLAELPLAHGWSWHAGEQAQLDARFPGRSRFDTRAPVGAWSAAVVFLPKSRELADYLLASLAARLPGGELFLVGEKRGGIERASKQLAAYGRPRKLDSARHCQLWQVQVEQAPAEPDLLALAQRYSLPLADGELQVVSLPGVFSHGRLDRGSALLLEHLDDLPKGHLLDFGCGAGVLGALVKRRYPASRLTLLDVDAFAVASSRLTLAANGLDGEVIAADGIDGAPRGLAAIVSNPPFHQGVHTDYQASERLLQRAAEHLAAGGELRLVANSFLKYPPLIERHLGPCRTLAEGDGFRVYTARRP</sequence>
<keyword id="KW-0963">Cytoplasm</keyword>
<keyword id="KW-0489">Methyltransferase</keyword>
<keyword id="KW-0698">rRNA processing</keyword>
<keyword id="KW-0949">S-adenosyl-L-methionine</keyword>
<keyword id="KW-0808">Transferase</keyword>
<proteinExistence type="inferred from homology"/>
<accession>A6VC20</accession>